<protein>
    <recommendedName>
        <fullName evidence="1">Chromophore lyase CpcT/CpeT 2</fullName>
        <ecNumber evidence="1">4.-.-.-</ecNumber>
    </recommendedName>
</protein>
<dbReference type="EC" id="4.-.-.-" evidence="1"/>
<dbReference type="EMBL" id="AP009552">
    <property type="protein sequence ID" value="BAG00855.1"/>
    <property type="molecule type" value="Genomic_DNA"/>
</dbReference>
<dbReference type="RefSeq" id="WP_012264519.1">
    <property type="nucleotide sequence ID" value="NC_010296.1"/>
</dbReference>
<dbReference type="SMR" id="B0JRV5"/>
<dbReference type="STRING" id="449447.MAE_10330"/>
<dbReference type="PaxDb" id="449447-MAE_10330"/>
<dbReference type="EnsemblBacteria" id="BAG00855">
    <property type="protein sequence ID" value="BAG00855"/>
    <property type="gene ID" value="MAE_10330"/>
</dbReference>
<dbReference type="KEGG" id="mar:MAE_10330"/>
<dbReference type="PATRIC" id="fig|449447.4.peg.944"/>
<dbReference type="eggNOG" id="ENOG502ZC00">
    <property type="taxonomic scope" value="Bacteria"/>
</dbReference>
<dbReference type="HOGENOM" id="CLU_092589_0_0_3"/>
<dbReference type="BioCyc" id="MAER449447:MAE_RS04525-MONOMER"/>
<dbReference type="Proteomes" id="UP000001510">
    <property type="component" value="Chromosome"/>
</dbReference>
<dbReference type="GO" id="GO:0016829">
    <property type="term" value="F:lyase activity"/>
    <property type="evidence" value="ECO:0007669"/>
    <property type="project" value="UniProtKB-KW"/>
</dbReference>
<dbReference type="CDD" id="cd16338">
    <property type="entry name" value="CpcT"/>
    <property type="match status" value="1"/>
</dbReference>
<dbReference type="Gene3D" id="2.40.128.590">
    <property type="entry name" value="CpcT/CpeT domain"/>
    <property type="match status" value="1"/>
</dbReference>
<dbReference type="HAMAP" id="MF_01460">
    <property type="entry name" value="Chrphore_lyase_CpxT"/>
    <property type="match status" value="1"/>
</dbReference>
<dbReference type="InterPro" id="IPR010404">
    <property type="entry name" value="CpcT/CpeT"/>
</dbReference>
<dbReference type="InterPro" id="IPR038672">
    <property type="entry name" value="CpcT/CpeT_sf"/>
</dbReference>
<dbReference type="PANTHER" id="PTHR35137">
    <property type="entry name" value="CHROMOPHORE LYASE CRL, CHLOROPLASTIC"/>
    <property type="match status" value="1"/>
</dbReference>
<dbReference type="PANTHER" id="PTHR35137:SF1">
    <property type="entry name" value="CHROMOPHORE LYASE CRL, CHLOROPLASTIC"/>
    <property type="match status" value="1"/>
</dbReference>
<dbReference type="Pfam" id="PF06206">
    <property type="entry name" value="CpeT"/>
    <property type="match status" value="1"/>
</dbReference>
<feature type="chain" id="PRO_0000403158" description="Chromophore lyase CpcT/CpeT 2">
    <location>
        <begin position="1"/>
        <end position="200"/>
    </location>
</feature>
<gene>
    <name evidence="1" type="primary">cpcT2</name>
    <name type="ordered locus">MAE_10330</name>
</gene>
<evidence type="ECO:0000255" key="1">
    <source>
        <dbReference type="HAMAP-Rule" id="MF_01460"/>
    </source>
</evidence>
<accession>B0JRV5</accession>
<organism>
    <name type="scientific">Microcystis aeruginosa (strain NIES-843 / IAM M-2473)</name>
    <dbReference type="NCBI Taxonomy" id="449447"/>
    <lineage>
        <taxon>Bacteria</taxon>
        <taxon>Bacillati</taxon>
        <taxon>Cyanobacteriota</taxon>
        <taxon>Cyanophyceae</taxon>
        <taxon>Oscillatoriophycideae</taxon>
        <taxon>Chroococcales</taxon>
        <taxon>Microcystaceae</taxon>
        <taxon>Microcystis</taxon>
    </lineage>
</organism>
<comment type="function">
    <text evidence="1">Covalently attaches a chromophore to Cys residue(s) of phycobiliproteins.</text>
</comment>
<comment type="similarity">
    <text evidence="1">Belongs to the CpcT/CpeT biliprotein lyase family.</text>
</comment>
<name>CPXT2_MICAN</name>
<sequence>MTPELITFGRYLAGEFENQRQAQAEPVWYVHLRLWLRPLPLFREDSIALFAEQASIINLDQPYRPRLWRLTHSESGGLEVRHYMFNDLKSVQGAGKNPDILRKISLEDLTFLPTCTLAVKVNTLADNQYQFIAQPQPEQRCQFTYEGTTYQVALGFEVTSHSLKTYDKGLDPGTGKGIWGALLGPYQYEKKRDFSAELDV</sequence>
<reference key="1">
    <citation type="journal article" date="2007" name="DNA Res.">
        <title>Complete genomic structure of the bloom-forming toxic cyanobacterium Microcystis aeruginosa NIES-843.</title>
        <authorList>
            <person name="Kaneko T."/>
            <person name="Nakajima N."/>
            <person name="Okamoto S."/>
            <person name="Suzuki I."/>
            <person name="Tanabe Y."/>
            <person name="Tamaoki M."/>
            <person name="Nakamura Y."/>
            <person name="Kasai F."/>
            <person name="Watanabe A."/>
            <person name="Kawashima K."/>
            <person name="Kishida Y."/>
            <person name="Ono A."/>
            <person name="Shimizu Y."/>
            <person name="Takahashi C."/>
            <person name="Minami C."/>
            <person name="Fujishiro T."/>
            <person name="Kohara M."/>
            <person name="Katoh M."/>
            <person name="Nakazaki N."/>
            <person name="Nakayama S."/>
            <person name="Yamada M."/>
            <person name="Tabata S."/>
            <person name="Watanabe M.M."/>
        </authorList>
    </citation>
    <scope>NUCLEOTIDE SEQUENCE [LARGE SCALE GENOMIC DNA]</scope>
    <source>
        <strain>NIES-843 / IAM M-247</strain>
    </source>
</reference>
<proteinExistence type="inferred from homology"/>
<keyword id="KW-0456">Lyase</keyword>